<proteinExistence type="inferred from homology"/>
<sequence>MAMTYHLDVVSAEQQMFSGLVEKIQVTGSEGELGIYPGHAPLLTAIKPGMIRIVKQHGHEEFIYLSGGILEVQPGNVTVLADTAIRGQDLDEARAMEAKRKAEEHISSSHGDVDYAQASAELAKAIAQLRVIELTKKAM</sequence>
<dbReference type="EMBL" id="CP000034">
    <property type="protein sequence ID" value="ABB63935.1"/>
    <property type="molecule type" value="Genomic_DNA"/>
</dbReference>
<dbReference type="RefSeq" id="WP_001251965.1">
    <property type="nucleotide sequence ID" value="NC_007606.1"/>
</dbReference>
<dbReference type="RefSeq" id="YP_405426.1">
    <property type="nucleotide sequence ID" value="NC_007606.1"/>
</dbReference>
<dbReference type="SMR" id="Q329S0"/>
<dbReference type="STRING" id="300267.SDY_4017"/>
<dbReference type="EnsemblBacteria" id="ABB63935">
    <property type="protein sequence ID" value="ABB63935"/>
    <property type="gene ID" value="SDY_4017"/>
</dbReference>
<dbReference type="KEGG" id="sdy:SDY_4017"/>
<dbReference type="PATRIC" id="fig|300267.13.peg.4730"/>
<dbReference type="HOGENOM" id="CLU_084338_2_0_6"/>
<dbReference type="Proteomes" id="UP000002716">
    <property type="component" value="Chromosome"/>
</dbReference>
<dbReference type="GO" id="GO:0005886">
    <property type="term" value="C:plasma membrane"/>
    <property type="evidence" value="ECO:0007669"/>
    <property type="project" value="UniProtKB-SubCell"/>
</dbReference>
<dbReference type="GO" id="GO:0045259">
    <property type="term" value="C:proton-transporting ATP synthase complex"/>
    <property type="evidence" value="ECO:0007669"/>
    <property type="project" value="UniProtKB-KW"/>
</dbReference>
<dbReference type="GO" id="GO:0005524">
    <property type="term" value="F:ATP binding"/>
    <property type="evidence" value="ECO:0007669"/>
    <property type="project" value="UniProtKB-UniRule"/>
</dbReference>
<dbReference type="GO" id="GO:0046933">
    <property type="term" value="F:proton-transporting ATP synthase activity, rotational mechanism"/>
    <property type="evidence" value="ECO:0007669"/>
    <property type="project" value="UniProtKB-UniRule"/>
</dbReference>
<dbReference type="CDD" id="cd12152">
    <property type="entry name" value="F1-ATPase_delta"/>
    <property type="match status" value="1"/>
</dbReference>
<dbReference type="FunFam" id="1.20.5.440:FF:000001">
    <property type="entry name" value="ATP synthase epsilon chain"/>
    <property type="match status" value="1"/>
</dbReference>
<dbReference type="FunFam" id="2.60.15.10:FF:000001">
    <property type="entry name" value="ATP synthase epsilon chain"/>
    <property type="match status" value="1"/>
</dbReference>
<dbReference type="Gene3D" id="1.20.5.440">
    <property type="entry name" value="ATP synthase delta/epsilon subunit, C-terminal domain"/>
    <property type="match status" value="1"/>
</dbReference>
<dbReference type="Gene3D" id="2.60.15.10">
    <property type="entry name" value="F0F1 ATP synthase delta/epsilon subunit, N-terminal"/>
    <property type="match status" value="1"/>
</dbReference>
<dbReference type="HAMAP" id="MF_00530">
    <property type="entry name" value="ATP_synth_epsil_bac"/>
    <property type="match status" value="1"/>
</dbReference>
<dbReference type="InterPro" id="IPR036794">
    <property type="entry name" value="ATP_F1_dsu/esu_C_sf"/>
</dbReference>
<dbReference type="InterPro" id="IPR001469">
    <property type="entry name" value="ATP_synth_F1_dsu/esu"/>
</dbReference>
<dbReference type="InterPro" id="IPR020546">
    <property type="entry name" value="ATP_synth_F1_dsu/esu_N"/>
</dbReference>
<dbReference type="InterPro" id="IPR020547">
    <property type="entry name" value="ATP_synth_F1_esu_C"/>
</dbReference>
<dbReference type="InterPro" id="IPR036771">
    <property type="entry name" value="ATPsynth_dsu/esu_N"/>
</dbReference>
<dbReference type="NCBIfam" id="TIGR01216">
    <property type="entry name" value="ATP_synt_epsi"/>
    <property type="match status" value="1"/>
</dbReference>
<dbReference type="NCBIfam" id="NF001847">
    <property type="entry name" value="PRK00571.1-4"/>
    <property type="match status" value="1"/>
</dbReference>
<dbReference type="PANTHER" id="PTHR13822">
    <property type="entry name" value="ATP SYNTHASE DELTA/EPSILON CHAIN"/>
    <property type="match status" value="1"/>
</dbReference>
<dbReference type="PANTHER" id="PTHR13822:SF10">
    <property type="entry name" value="ATP SYNTHASE EPSILON CHAIN, CHLOROPLASTIC"/>
    <property type="match status" value="1"/>
</dbReference>
<dbReference type="Pfam" id="PF00401">
    <property type="entry name" value="ATP-synt_DE"/>
    <property type="match status" value="1"/>
</dbReference>
<dbReference type="Pfam" id="PF02823">
    <property type="entry name" value="ATP-synt_DE_N"/>
    <property type="match status" value="1"/>
</dbReference>
<dbReference type="SUPFAM" id="SSF46604">
    <property type="entry name" value="Epsilon subunit of F1F0-ATP synthase C-terminal domain"/>
    <property type="match status" value="1"/>
</dbReference>
<dbReference type="SUPFAM" id="SSF51344">
    <property type="entry name" value="Epsilon subunit of F1F0-ATP synthase N-terminal domain"/>
    <property type="match status" value="1"/>
</dbReference>
<protein>
    <recommendedName>
        <fullName evidence="1">ATP synthase epsilon chain</fullName>
    </recommendedName>
    <alternativeName>
        <fullName evidence="1">ATP synthase F1 sector epsilon subunit</fullName>
    </alternativeName>
    <alternativeName>
        <fullName evidence="1">F-ATPase epsilon subunit</fullName>
    </alternativeName>
</protein>
<reference key="1">
    <citation type="journal article" date="2005" name="Nucleic Acids Res.">
        <title>Genome dynamics and diversity of Shigella species, the etiologic agents of bacillary dysentery.</title>
        <authorList>
            <person name="Yang F."/>
            <person name="Yang J."/>
            <person name="Zhang X."/>
            <person name="Chen L."/>
            <person name="Jiang Y."/>
            <person name="Yan Y."/>
            <person name="Tang X."/>
            <person name="Wang J."/>
            <person name="Xiong Z."/>
            <person name="Dong J."/>
            <person name="Xue Y."/>
            <person name="Zhu Y."/>
            <person name="Xu X."/>
            <person name="Sun L."/>
            <person name="Chen S."/>
            <person name="Nie H."/>
            <person name="Peng J."/>
            <person name="Xu J."/>
            <person name="Wang Y."/>
            <person name="Yuan Z."/>
            <person name="Wen Y."/>
            <person name="Yao Z."/>
            <person name="Shen Y."/>
            <person name="Qiang B."/>
            <person name="Hou Y."/>
            <person name="Yu J."/>
            <person name="Jin Q."/>
        </authorList>
    </citation>
    <scope>NUCLEOTIDE SEQUENCE [LARGE SCALE GENOMIC DNA]</scope>
    <source>
        <strain>Sd197</strain>
    </source>
</reference>
<feature type="chain" id="PRO_0000265893" description="ATP synthase epsilon chain">
    <location>
        <begin position="1"/>
        <end position="139"/>
    </location>
</feature>
<gene>
    <name evidence="1" type="primary">atpC</name>
    <name type="ordered locus">SDY_4017</name>
</gene>
<organism>
    <name type="scientific">Shigella dysenteriae serotype 1 (strain Sd197)</name>
    <dbReference type="NCBI Taxonomy" id="300267"/>
    <lineage>
        <taxon>Bacteria</taxon>
        <taxon>Pseudomonadati</taxon>
        <taxon>Pseudomonadota</taxon>
        <taxon>Gammaproteobacteria</taxon>
        <taxon>Enterobacterales</taxon>
        <taxon>Enterobacteriaceae</taxon>
        <taxon>Shigella</taxon>
    </lineage>
</organism>
<keyword id="KW-0066">ATP synthesis</keyword>
<keyword id="KW-0997">Cell inner membrane</keyword>
<keyword id="KW-1003">Cell membrane</keyword>
<keyword id="KW-0139">CF(1)</keyword>
<keyword id="KW-0375">Hydrogen ion transport</keyword>
<keyword id="KW-0406">Ion transport</keyword>
<keyword id="KW-0472">Membrane</keyword>
<keyword id="KW-1185">Reference proteome</keyword>
<keyword id="KW-0813">Transport</keyword>
<evidence type="ECO:0000255" key="1">
    <source>
        <dbReference type="HAMAP-Rule" id="MF_00530"/>
    </source>
</evidence>
<accession>Q329S0</accession>
<comment type="function">
    <text evidence="1">Produces ATP from ADP in the presence of a proton gradient across the membrane.</text>
</comment>
<comment type="subunit">
    <text>F-type ATPases have 2 components, CF(1) - the catalytic core - and CF(0) - the membrane proton channel. CF(1) has five subunits: alpha(3), beta(3), gamma(1), delta(1), epsilon(1). CF(0) has three main subunits: a, b and c.</text>
</comment>
<comment type="subcellular location">
    <subcellularLocation>
        <location evidence="1">Cell inner membrane</location>
        <topology evidence="1">Peripheral membrane protein</topology>
    </subcellularLocation>
</comment>
<comment type="similarity">
    <text evidence="1">Belongs to the ATPase epsilon chain family.</text>
</comment>
<name>ATPE_SHIDS</name>